<gene>
    <name evidence="1" type="primary">bioB</name>
    <name type="ordered locus">VP1113</name>
</gene>
<keyword id="KW-0001">2Fe-2S</keyword>
<keyword id="KW-0004">4Fe-4S</keyword>
<keyword id="KW-0093">Biotin biosynthesis</keyword>
<keyword id="KW-0408">Iron</keyword>
<keyword id="KW-0411">Iron-sulfur</keyword>
<keyword id="KW-0479">Metal-binding</keyword>
<keyword id="KW-0949">S-adenosyl-L-methionine</keyword>
<keyword id="KW-0808">Transferase</keyword>
<feature type="chain" id="PRO_0000381700" description="Biotin synthase">
    <location>
        <begin position="1"/>
        <end position="350"/>
    </location>
</feature>
<feature type="domain" description="Radical SAM core" evidence="2">
    <location>
        <begin position="38"/>
        <end position="256"/>
    </location>
</feature>
<feature type="binding site" evidence="1">
    <location>
        <position position="53"/>
    </location>
    <ligand>
        <name>[4Fe-4S] cluster</name>
        <dbReference type="ChEBI" id="CHEBI:49883"/>
        <note>4Fe-4S-S-AdoMet</note>
    </ligand>
</feature>
<feature type="binding site" evidence="1">
    <location>
        <position position="57"/>
    </location>
    <ligand>
        <name>[4Fe-4S] cluster</name>
        <dbReference type="ChEBI" id="CHEBI:49883"/>
        <note>4Fe-4S-S-AdoMet</note>
    </ligand>
</feature>
<feature type="binding site" evidence="1">
    <location>
        <position position="60"/>
    </location>
    <ligand>
        <name>[4Fe-4S] cluster</name>
        <dbReference type="ChEBI" id="CHEBI:49883"/>
        <note>4Fe-4S-S-AdoMet</note>
    </ligand>
</feature>
<feature type="binding site" evidence="1">
    <location>
        <position position="97"/>
    </location>
    <ligand>
        <name>[2Fe-2S] cluster</name>
        <dbReference type="ChEBI" id="CHEBI:190135"/>
    </ligand>
</feature>
<feature type="binding site" evidence="1">
    <location>
        <position position="128"/>
    </location>
    <ligand>
        <name>[2Fe-2S] cluster</name>
        <dbReference type="ChEBI" id="CHEBI:190135"/>
    </ligand>
</feature>
<feature type="binding site" evidence="1">
    <location>
        <position position="188"/>
    </location>
    <ligand>
        <name>[2Fe-2S] cluster</name>
        <dbReference type="ChEBI" id="CHEBI:190135"/>
    </ligand>
</feature>
<feature type="binding site" evidence="1">
    <location>
        <position position="260"/>
    </location>
    <ligand>
        <name>[2Fe-2S] cluster</name>
        <dbReference type="ChEBI" id="CHEBI:190135"/>
    </ligand>
</feature>
<proteinExistence type="inferred from homology"/>
<comment type="function">
    <text evidence="1">Catalyzes the conversion of dethiobiotin (DTB) to biotin by the insertion of a sulfur atom into dethiobiotin via a radical-based mechanism.</text>
</comment>
<comment type="catalytic activity">
    <reaction evidence="1">
        <text>(4R,5S)-dethiobiotin + (sulfur carrier)-SH + 2 reduced [2Fe-2S]-[ferredoxin] + 2 S-adenosyl-L-methionine = (sulfur carrier)-H + biotin + 2 5'-deoxyadenosine + 2 L-methionine + 2 oxidized [2Fe-2S]-[ferredoxin]</text>
        <dbReference type="Rhea" id="RHEA:22060"/>
        <dbReference type="Rhea" id="RHEA-COMP:10000"/>
        <dbReference type="Rhea" id="RHEA-COMP:10001"/>
        <dbReference type="Rhea" id="RHEA-COMP:14737"/>
        <dbReference type="Rhea" id="RHEA-COMP:14739"/>
        <dbReference type="ChEBI" id="CHEBI:17319"/>
        <dbReference type="ChEBI" id="CHEBI:29917"/>
        <dbReference type="ChEBI" id="CHEBI:33737"/>
        <dbReference type="ChEBI" id="CHEBI:33738"/>
        <dbReference type="ChEBI" id="CHEBI:57586"/>
        <dbReference type="ChEBI" id="CHEBI:57844"/>
        <dbReference type="ChEBI" id="CHEBI:59789"/>
        <dbReference type="ChEBI" id="CHEBI:64428"/>
        <dbReference type="ChEBI" id="CHEBI:149473"/>
        <dbReference type="EC" id="2.8.1.6"/>
    </reaction>
</comment>
<comment type="cofactor">
    <cofactor evidence="1">
        <name>[4Fe-4S] cluster</name>
        <dbReference type="ChEBI" id="CHEBI:49883"/>
    </cofactor>
    <text evidence="1">Binds 1 [4Fe-4S] cluster. The cluster is coordinated with 3 cysteines and an exchangeable S-adenosyl-L-methionine.</text>
</comment>
<comment type="cofactor">
    <cofactor evidence="1">
        <name>[2Fe-2S] cluster</name>
        <dbReference type="ChEBI" id="CHEBI:190135"/>
    </cofactor>
    <text evidence="1">Binds 1 [2Fe-2S] cluster. The cluster is coordinated with 3 cysteines and 1 arginine.</text>
</comment>
<comment type="pathway">
    <text evidence="1">Cofactor biosynthesis; biotin biosynthesis; biotin from 7,8-diaminononanoate: step 2/2.</text>
</comment>
<comment type="subunit">
    <text evidence="1">Homodimer.</text>
</comment>
<comment type="similarity">
    <text evidence="1">Belongs to the radical SAM superfamily. Biotin synthase family.</text>
</comment>
<protein>
    <recommendedName>
        <fullName evidence="1">Biotin synthase</fullName>
        <ecNumber evidence="1">2.8.1.6</ecNumber>
    </recommendedName>
</protein>
<name>BIOB_VIBPA</name>
<evidence type="ECO:0000255" key="1">
    <source>
        <dbReference type="HAMAP-Rule" id="MF_01694"/>
    </source>
</evidence>
<evidence type="ECO:0000255" key="2">
    <source>
        <dbReference type="PROSITE-ProRule" id="PRU01266"/>
    </source>
</evidence>
<sequence>MEVRHNWTHAEVRDLMEKPFMDLLFEAQLVHRQYQQTNHVQVSTLLSIKTGACPEDCKYCPQSARYTTDIEKERLMEVERVLDAAQKAKNAGSTRFCMGAAWKNPKERDMPHLTDMIKGVKDMGLETCMTLGMLTPEQAKQLANAGLDYYNHNLDTSPEFYGNIITTRTYQDRLDTLSHVRDAGMKICSGGIIGMGESANDRAGLLVELANLPTHPESVPINMLVKVKGTPLETVDDVDPFDFIRLIAIARIMMPQSAVRLSAGRENMNEQMQALCFMAGANSVFYGCKLLTTPNPSEDKDMMLFKKLGINSQEVSQKPDEIEENELLDRVVERVAARPTKDDLFYDASV</sequence>
<accession>Q87QN6</accession>
<organism>
    <name type="scientific">Vibrio parahaemolyticus serotype O3:K6 (strain RIMD 2210633)</name>
    <dbReference type="NCBI Taxonomy" id="223926"/>
    <lineage>
        <taxon>Bacteria</taxon>
        <taxon>Pseudomonadati</taxon>
        <taxon>Pseudomonadota</taxon>
        <taxon>Gammaproteobacteria</taxon>
        <taxon>Vibrionales</taxon>
        <taxon>Vibrionaceae</taxon>
        <taxon>Vibrio</taxon>
    </lineage>
</organism>
<reference key="1">
    <citation type="journal article" date="2003" name="Lancet">
        <title>Genome sequence of Vibrio parahaemolyticus: a pathogenic mechanism distinct from that of V. cholerae.</title>
        <authorList>
            <person name="Makino K."/>
            <person name="Oshima K."/>
            <person name="Kurokawa K."/>
            <person name="Yokoyama K."/>
            <person name="Uda T."/>
            <person name="Tagomori K."/>
            <person name="Iijima Y."/>
            <person name="Najima M."/>
            <person name="Nakano M."/>
            <person name="Yamashita A."/>
            <person name="Kubota Y."/>
            <person name="Kimura S."/>
            <person name="Yasunaga T."/>
            <person name="Honda T."/>
            <person name="Shinagawa H."/>
            <person name="Hattori M."/>
            <person name="Iida T."/>
        </authorList>
    </citation>
    <scope>NUCLEOTIDE SEQUENCE [LARGE SCALE GENOMIC DNA]</scope>
    <source>
        <strain>RIMD 2210633</strain>
    </source>
</reference>
<dbReference type="EC" id="2.8.1.6" evidence="1"/>
<dbReference type="EMBL" id="BA000031">
    <property type="protein sequence ID" value="BAC59376.1"/>
    <property type="molecule type" value="Genomic_DNA"/>
</dbReference>
<dbReference type="RefSeq" id="NP_797492.1">
    <property type="nucleotide sequence ID" value="NC_004603.1"/>
</dbReference>
<dbReference type="RefSeq" id="WP_005460014.1">
    <property type="nucleotide sequence ID" value="NC_004603.1"/>
</dbReference>
<dbReference type="SMR" id="Q87QN6"/>
<dbReference type="GeneID" id="1188618"/>
<dbReference type="KEGG" id="vpa:VP1113"/>
<dbReference type="PATRIC" id="fig|223926.6.peg.1055"/>
<dbReference type="eggNOG" id="COG0502">
    <property type="taxonomic scope" value="Bacteria"/>
</dbReference>
<dbReference type="HOGENOM" id="CLU_033172_1_2_6"/>
<dbReference type="UniPathway" id="UPA00078">
    <property type="reaction ID" value="UER00162"/>
</dbReference>
<dbReference type="Proteomes" id="UP000002493">
    <property type="component" value="Chromosome 1"/>
</dbReference>
<dbReference type="GO" id="GO:0051537">
    <property type="term" value="F:2 iron, 2 sulfur cluster binding"/>
    <property type="evidence" value="ECO:0007669"/>
    <property type="project" value="UniProtKB-KW"/>
</dbReference>
<dbReference type="GO" id="GO:0051539">
    <property type="term" value="F:4 iron, 4 sulfur cluster binding"/>
    <property type="evidence" value="ECO:0007669"/>
    <property type="project" value="UniProtKB-KW"/>
</dbReference>
<dbReference type="GO" id="GO:0004076">
    <property type="term" value="F:biotin synthase activity"/>
    <property type="evidence" value="ECO:0007669"/>
    <property type="project" value="UniProtKB-UniRule"/>
</dbReference>
<dbReference type="GO" id="GO:0005506">
    <property type="term" value="F:iron ion binding"/>
    <property type="evidence" value="ECO:0007669"/>
    <property type="project" value="UniProtKB-UniRule"/>
</dbReference>
<dbReference type="GO" id="GO:0009102">
    <property type="term" value="P:biotin biosynthetic process"/>
    <property type="evidence" value="ECO:0007669"/>
    <property type="project" value="UniProtKB-UniRule"/>
</dbReference>
<dbReference type="CDD" id="cd01335">
    <property type="entry name" value="Radical_SAM"/>
    <property type="match status" value="1"/>
</dbReference>
<dbReference type="FunFam" id="3.20.20.70:FF:000011">
    <property type="entry name" value="Biotin synthase"/>
    <property type="match status" value="1"/>
</dbReference>
<dbReference type="Gene3D" id="3.20.20.70">
    <property type="entry name" value="Aldolase class I"/>
    <property type="match status" value="1"/>
</dbReference>
<dbReference type="HAMAP" id="MF_01694">
    <property type="entry name" value="BioB"/>
    <property type="match status" value="1"/>
</dbReference>
<dbReference type="InterPro" id="IPR013785">
    <property type="entry name" value="Aldolase_TIM"/>
</dbReference>
<dbReference type="InterPro" id="IPR010722">
    <property type="entry name" value="BATS_dom"/>
</dbReference>
<dbReference type="InterPro" id="IPR002684">
    <property type="entry name" value="Biotin_synth/BioAB"/>
</dbReference>
<dbReference type="InterPro" id="IPR024177">
    <property type="entry name" value="Biotin_synthase"/>
</dbReference>
<dbReference type="InterPro" id="IPR006638">
    <property type="entry name" value="Elp3/MiaA/NifB-like_rSAM"/>
</dbReference>
<dbReference type="InterPro" id="IPR007197">
    <property type="entry name" value="rSAM"/>
</dbReference>
<dbReference type="NCBIfam" id="TIGR00433">
    <property type="entry name" value="bioB"/>
    <property type="match status" value="1"/>
</dbReference>
<dbReference type="PANTHER" id="PTHR22976">
    <property type="entry name" value="BIOTIN SYNTHASE"/>
    <property type="match status" value="1"/>
</dbReference>
<dbReference type="PANTHER" id="PTHR22976:SF2">
    <property type="entry name" value="BIOTIN SYNTHASE, MITOCHONDRIAL"/>
    <property type="match status" value="1"/>
</dbReference>
<dbReference type="Pfam" id="PF06968">
    <property type="entry name" value="BATS"/>
    <property type="match status" value="1"/>
</dbReference>
<dbReference type="Pfam" id="PF04055">
    <property type="entry name" value="Radical_SAM"/>
    <property type="match status" value="1"/>
</dbReference>
<dbReference type="PIRSF" id="PIRSF001619">
    <property type="entry name" value="Biotin_synth"/>
    <property type="match status" value="1"/>
</dbReference>
<dbReference type="SFLD" id="SFLDG01060">
    <property type="entry name" value="BATS_domain_containing"/>
    <property type="match status" value="1"/>
</dbReference>
<dbReference type="SFLD" id="SFLDF00272">
    <property type="entry name" value="biotin_synthase"/>
    <property type="match status" value="1"/>
</dbReference>
<dbReference type="SMART" id="SM00876">
    <property type="entry name" value="BATS"/>
    <property type="match status" value="1"/>
</dbReference>
<dbReference type="SMART" id="SM00729">
    <property type="entry name" value="Elp3"/>
    <property type="match status" value="1"/>
</dbReference>
<dbReference type="SUPFAM" id="SSF102114">
    <property type="entry name" value="Radical SAM enzymes"/>
    <property type="match status" value="1"/>
</dbReference>
<dbReference type="PROSITE" id="PS51918">
    <property type="entry name" value="RADICAL_SAM"/>
    <property type="match status" value="1"/>
</dbReference>